<gene>
    <name evidence="6" type="primary">AGL104</name>
    <name evidence="8" type="ordered locus">At1g22130</name>
    <name evidence="9" type="ORF">F2E2.20</name>
</gene>
<accession>Q9LM46</accession>
<accession>Q76K81</accession>
<reference key="1">
    <citation type="journal article" date="2000" name="Nature">
        <title>Sequence and analysis of chromosome 1 of the plant Arabidopsis thaliana.</title>
        <authorList>
            <person name="Theologis A."/>
            <person name="Ecker J.R."/>
            <person name="Palm C.J."/>
            <person name="Federspiel N.A."/>
            <person name="Kaul S."/>
            <person name="White O."/>
            <person name="Alonso J."/>
            <person name="Altafi H."/>
            <person name="Araujo R."/>
            <person name="Bowman C.L."/>
            <person name="Brooks S.Y."/>
            <person name="Buehler E."/>
            <person name="Chan A."/>
            <person name="Chao Q."/>
            <person name="Chen H."/>
            <person name="Cheuk R.F."/>
            <person name="Chin C.W."/>
            <person name="Chung M.K."/>
            <person name="Conn L."/>
            <person name="Conway A.B."/>
            <person name="Conway A.R."/>
            <person name="Creasy T.H."/>
            <person name="Dewar K."/>
            <person name="Dunn P."/>
            <person name="Etgu P."/>
            <person name="Feldblyum T.V."/>
            <person name="Feng J.-D."/>
            <person name="Fong B."/>
            <person name="Fujii C.Y."/>
            <person name="Gill J.E."/>
            <person name="Goldsmith A.D."/>
            <person name="Haas B."/>
            <person name="Hansen N.F."/>
            <person name="Hughes B."/>
            <person name="Huizar L."/>
            <person name="Hunter J.L."/>
            <person name="Jenkins J."/>
            <person name="Johnson-Hopson C."/>
            <person name="Khan S."/>
            <person name="Khaykin E."/>
            <person name="Kim C.J."/>
            <person name="Koo H.L."/>
            <person name="Kremenetskaia I."/>
            <person name="Kurtz D.B."/>
            <person name="Kwan A."/>
            <person name="Lam B."/>
            <person name="Langin-Hooper S."/>
            <person name="Lee A."/>
            <person name="Lee J.M."/>
            <person name="Lenz C.A."/>
            <person name="Li J.H."/>
            <person name="Li Y.-P."/>
            <person name="Lin X."/>
            <person name="Liu S.X."/>
            <person name="Liu Z.A."/>
            <person name="Luros J.S."/>
            <person name="Maiti R."/>
            <person name="Marziali A."/>
            <person name="Militscher J."/>
            <person name="Miranda M."/>
            <person name="Nguyen M."/>
            <person name="Nierman W.C."/>
            <person name="Osborne B.I."/>
            <person name="Pai G."/>
            <person name="Peterson J."/>
            <person name="Pham P.K."/>
            <person name="Rizzo M."/>
            <person name="Rooney T."/>
            <person name="Rowley D."/>
            <person name="Sakano H."/>
            <person name="Salzberg S.L."/>
            <person name="Schwartz J.R."/>
            <person name="Shinn P."/>
            <person name="Southwick A.M."/>
            <person name="Sun H."/>
            <person name="Tallon L.J."/>
            <person name="Tambunga G."/>
            <person name="Toriumi M.J."/>
            <person name="Town C.D."/>
            <person name="Utterback T."/>
            <person name="Van Aken S."/>
            <person name="Vaysberg M."/>
            <person name="Vysotskaia V.S."/>
            <person name="Walker M."/>
            <person name="Wu D."/>
            <person name="Yu G."/>
            <person name="Fraser C.M."/>
            <person name="Venter J.C."/>
            <person name="Davis R.W."/>
        </authorList>
    </citation>
    <scope>NUCLEOTIDE SEQUENCE [LARGE SCALE GENOMIC DNA]</scope>
    <source>
        <strain>cv. Columbia</strain>
    </source>
</reference>
<reference key="2">
    <citation type="journal article" date="2017" name="Plant J.">
        <title>Araport11: a complete reannotation of the Arabidopsis thaliana reference genome.</title>
        <authorList>
            <person name="Cheng C.Y."/>
            <person name="Krishnakumar V."/>
            <person name="Chan A.P."/>
            <person name="Thibaud-Nissen F."/>
            <person name="Schobel S."/>
            <person name="Town C.D."/>
        </authorList>
    </citation>
    <scope>GENOME REANNOTATION</scope>
    <source>
        <strain>cv. Columbia</strain>
    </source>
</reference>
<reference key="3">
    <citation type="journal article" date="2006" name="Plant Biotechnol. J.">
        <title>Simultaneous high-throughput recombinational cloning of open reading frames in closed and open configurations.</title>
        <authorList>
            <person name="Underwood B.A."/>
            <person name="Vanderhaeghen R."/>
            <person name="Whitford R."/>
            <person name="Town C.D."/>
            <person name="Hilson P."/>
        </authorList>
    </citation>
    <scope>NUCLEOTIDE SEQUENCE [LARGE SCALE MRNA]</scope>
    <source>
        <strain>cv. Columbia</strain>
    </source>
</reference>
<reference key="4">
    <citation type="journal article" date="2003" name="Mol. Biol. Evol.">
        <title>Evolution and divergence of the MADS-box gene family based on genome-wide expression analyses.</title>
        <authorList>
            <person name="Kofuji R."/>
            <person name="Sumikawa N."/>
            <person name="Yamasaki M."/>
            <person name="Kondo K."/>
            <person name="Ueda K."/>
            <person name="Ito M."/>
            <person name="Hasebe M."/>
        </authorList>
    </citation>
    <scope>NUCLEOTIDE SEQUENCE [MRNA] OF 55-335</scope>
    <scope>TISSUE SPECIFICITY</scope>
    <source>
        <strain>cv. Columbia</strain>
    </source>
</reference>
<reference key="5">
    <citation type="journal article" date="2003" name="Plant Cell">
        <title>Molecular and phylogenetic analyses of the complete MADS-box transcription factor family in Arabidopsis: new openings to the MADS world.</title>
        <authorList>
            <person name="Parenicova L."/>
            <person name="de Folter S."/>
            <person name="Kieffer M."/>
            <person name="Horner D.S."/>
            <person name="Favalli C."/>
            <person name="Busscher J."/>
            <person name="Cook H.E."/>
            <person name="Ingram R.M."/>
            <person name="Kater M.M."/>
            <person name="Davies B."/>
            <person name="Angenent G.C."/>
            <person name="Colombo L."/>
        </authorList>
    </citation>
    <scope>GENE FAMILY</scope>
    <scope>NOMENCLATURE</scope>
</reference>
<reference key="6">
    <citation type="journal article" date="2009" name="Plant Physiol.">
        <title>MIKC* MADS domain heterodimers are required for pollen maturation and tube growth in Arabidopsis.</title>
        <authorList>
            <person name="Adamczyk B.J."/>
            <person name="Fernandez D.E."/>
        </authorList>
    </citation>
    <scope>FUNCTION</scope>
    <scope>INTERACTION WITH AGL30 AND AGL65</scope>
    <scope>DISRUPTION PHENOTYPE</scope>
</reference>
<keyword id="KW-0175">Coiled coil</keyword>
<keyword id="KW-0238">DNA-binding</keyword>
<keyword id="KW-0539">Nucleus</keyword>
<keyword id="KW-1185">Reference proteome</keyword>
<keyword id="KW-0804">Transcription</keyword>
<keyword id="KW-0805">Transcription regulation</keyword>
<organism>
    <name type="scientific">Arabidopsis thaliana</name>
    <name type="common">Mouse-ear cress</name>
    <dbReference type="NCBI Taxonomy" id="3702"/>
    <lineage>
        <taxon>Eukaryota</taxon>
        <taxon>Viridiplantae</taxon>
        <taxon>Streptophyta</taxon>
        <taxon>Embryophyta</taxon>
        <taxon>Tracheophyta</taxon>
        <taxon>Spermatophyta</taxon>
        <taxon>Magnoliopsida</taxon>
        <taxon>eudicotyledons</taxon>
        <taxon>Gunneridae</taxon>
        <taxon>Pentapetalae</taxon>
        <taxon>rosids</taxon>
        <taxon>malvids</taxon>
        <taxon>Brassicales</taxon>
        <taxon>Brassicaceae</taxon>
        <taxon>Camelineae</taxon>
        <taxon>Arabidopsis</taxon>
    </lineage>
</organism>
<feature type="chain" id="PRO_0000433969" description="Agamous-like MADS-box protein AGL104">
    <location>
        <begin position="1"/>
        <end position="335"/>
    </location>
</feature>
<feature type="domain" description="MADS-box" evidence="2">
    <location>
        <begin position="1"/>
        <end position="61"/>
    </location>
</feature>
<feature type="region of interest" description="Disordered" evidence="3">
    <location>
        <begin position="302"/>
        <end position="335"/>
    </location>
</feature>
<feature type="coiled-coil region" evidence="1">
    <location>
        <begin position="124"/>
        <end position="151"/>
    </location>
</feature>
<feature type="compositionally biased region" description="Basic and acidic residues" evidence="3">
    <location>
        <begin position="317"/>
        <end position="327"/>
    </location>
</feature>
<sequence length="335" mass="38279">MGRVKLEIKRIENTTNRQVTFSKRRNGLIKKAYELSILCDIDIALIMFSPSDRLSLFSGKTRIEDVFSRFINLPKQERESALYFPDQNRRPDIQNKECLLRILQQLKTENDIALQVTNPAAINSDVEELEHEVCRLQQQLQMAEEELRRYEPDPIRFTTMEEYEVSEKQLLDTLTHVVQRRDHLMSNHLSSYEASTMQPNIGGPFVNDVVEGWLPENGTNQTHLFDASAHSNQLRELSSAMYEPLLQGSSSSSNQNNMSECHVTNHNGEMFPEWAQAYSSSALFASMQQQHEGVGPSIEEMMPAQQSDIPGVTAETQVDHEVSDYETKVPQLSSQ</sequence>
<protein>
    <recommendedName>
        <fullName evidence="7">Agamous-like MADS-box protein AGL104</fullName>
    </recommendedName>
</protein>
<name>AG104_ARATH</name>
<evidence type="ECO:0000255" key="1"/>
<evidence type="ECO:0000255" key="2">
    <source>
        <dbReference type="PROSITE-ProRule" id="PRU00251"/>
    </source>
</evidence>
<evidence type="ECO:0000256" key="3">
    <source>
        <dbReference type="SAM" id="MobiDB-lite"/>
    </source>
</evidence>
<evidence type="ECO:0000269" key="4">
    <source>
    </source>
</evidence>
<evidence type="ECO:0000269" key="5">
    <source>
    </source>
</evidence>
<evidence type="ECO:0000303" key="6">
    <source>
    </source>
</evidence>
<evidence type="ECO:0000305" key="7"/>
<evidence type="ECO:0000312" key="8">
    <source>
        <dbReference type="Araport" id="AT1G22130"/>
    </source>
</evidence>
<evidence type="ECO:0000312" key="9">
    <source>
        <dbReference type="EMBL" id="AAF86555.1"/>
    </source>
</evidence>
<proteinExistence type="evidence at protein level"/>
<comment type="function">
    <text evidence="5">Probable transcription factor that forms heterodimers with the MADS-box proteins AGL30 and AGL65 and is involved in the regulation of pollen maturation at the late stages of pollen development and pollen tube growth.</text>
</comment>
<comment type="subunit">
    <text evidence="5">Forms heterodimers with AGL30 and AGL65.</text>
</comment>
<comment type="interaction">
    <interactant intactId="EBI-15194999">
        <id>Q9LM46</id>
    </interactant>
    <interactant intactId="EBI-622332">
        <id>Q7X9I0</id>
        <label>AGL65</label>
    </interactant>
    <organismsDiffer>false</organismsDiffer>
    <experiments>3</experiments>
</comment>
<comment type="interaction">
    <interactant intactId="EBI-15194999">
        <id>Q9LM46</id>
    </interactant>
    <interactant intactId="EBI-15200242">
        <id>Q766C0</id>
        <label>AGL94</label>
    </interactant>
    <organismsDiffer>false</organismsDiffer>
    <experiments>3</experiments>
</comment>
<comment type="subcellular location">
    <subcellularLocation>
        <location evidence="2">Nucleus</location>
    </subcellularLocation>
</comment>
<comment type="tissue specificity">
    <text evidence="4">Expressed in pollen.</text>
</comment>
<comment type="disruption phenotype">
    <text evidence="5">No visible phenotype under normal growth conditions. Pollen grains from the double mutant agl66 and agl104 have severely reduced viability, delayed germination and aberrant pollen tube growth.</text>
</comment>
<comment type="sequence caution" evidence="7">
    <conflict type="frameshift">
        <sequence resource="EMBL-CDS" id="BAC99090"/>
    </conflict>
</comment>
<dbReference type="EMBL" id="AC069252">
    <property type="protein sequence ID" value="AAF86555.1"/>
    <property type="molecule type" value="Genomic_DNA"/>
</dbReference>
<dbReference type="EMBL" id="CP002684">
    <property type="protein sequence ID" value="AEE30200.1"/>
    <property type="molecule type" value="Genomic_DNA"/>
</dbReference>
<dbReference type="EMBL" id="DQ056457">
    <property type="protein sequence ID" value="AAY78614.1"/>
    <property type="molecule type" value="mRNA"/>
</dbReference>
<dbReference type="EMBL" id="AB094115">
    <property type="protein sequence ID" value="BAC99090.1"/>
    <property type="status" value="ALT_FRAME"/>
    <property type="molecule type" value="mRNA"/>
</dbReference>
<dbReference type="PIR" id="A86354">
    <property type="entry name" value="A86354"/>
</dbReference>
<dbReference type="RefSeq" id="NP_173632.1">
    <property type="nucleotide sequence ID" value="NM_102063.3"/>
</dbReference>
<dbReference type="SMR" id="Q9LM46"/>
<dbReference type="FunCoup" id="Q9LM46">
    <property type="interactions" value="163"/>
</dbReference>
<dbReference type="IntAct" id="Q9LM46">
    <property type="interactions" value="11"/>
</dbReference>
<dbReference type="STRING" id="3702.Q9LM46"/>
<dbReference type="PaxDb" id="3702-AT1G22130.1"/>
<dbReference type="ProteomicsDB" id="244798"/>
<dbReference type="EnsemblPlants" id="AT1G22130.1">
    <property type="protein sequence ID" value="AT1G22130.1"/>
    <property type="gene ID" value="AT1G22130"/>
</dbReference>
<dbReference type="GeneID" id="838818"/>
<dbReference type="Gramene" id="AT1G22130.1">
    <property type="protein sequence ID" value="AT1G22130.1"/>
    <property type="gene ID" value="AT1G22130"/>
</dbReference>
<dbReference type="KEGG" id="ath:AT1G22130"/>
<dbReference type="Araport" id="AT1G22130"/>
<dbReference type="TAIR" id="AT1G22130">
    <property type="gene designation" value="AGL104"/>
</dbReference>
<dbReference type="eggNOG" id="KOG0014">
    <property type="taxonomic scope" value="Eukaryota"/>
</dbReference>
<dbReference type="HOGENOM" id="CLU_048196_1_1_1"/>
<dbReference type="InParanoid" id="Q9LM46"/>
<dbReference type="OMA" id="EHALIFP"/>
<dbReference type="OrthoDB" id="1898716at2759"/>
<dbReference type="PhylomeDB" id="Q9LM46"/>
<dbReference type="PRO" id="PR:Q9LM46"/>
<dbReference type="Proteomes" id="UP000006548">
    <property type="component" value="Chromosome 1"/>
</dbReference>
<dbReference type="ExpressionAtlas" id="Q9LM46">
    <property type="expression patterns" value="baseline and differential"/>
</dbReference>
<dbReference type="GO" id="GO:0005634">
    <property type="term" value="C:nucleus"/>
    <property type="evidence" value="ECO:0007669"/>
    <property type="project" value="UniProtKB-SubCell"/>
</dbReference>
<dbReference type="GO" id="GO:0003700">
    <property type="term" value="F:DNA-binding transcription factor activity"/>
    <property type="evidence" value="ECO:0000250"/>
    <property type="project" value="TAIR"/>
</dbReference>
<dbReference type="GO" id="GO:0046983">
    <property type="term" value="F:protein dimerization activity"/>
    <property type="evidence" value="ECO:0007669"/>
    <property type="project" value="InterPro"/>
</dbReference>
<dbReference type="GO" id="GO:0000977">
    <property type="term" value="F:RNA polymerase II transcription regulatory region sequence-specific DNA binding"/>
    <property type="evidence" value="ECO:0007669"/>
    <property type="project" value="InterPro"/>
</dbReference>
<dbReference type="GO" id="GO:0009555">
    <property type="term" value="P:pollen development"/>
    <property type="evidence" value="ECO:0000316"/>
    <property type="project" value="TAIR"/>
</dbReference>
<dbReference type="GO" id="GO:0010152">
    <property type="term" value="P:pollen maturation"/>
    <property type="evidence" value="ECO:0000315"/>
    <property type="project" value="UniProtKB"/>
</dbReference>
<dbReference type="GO" id="GO:0045944">
    <property type="term" value="P:positive regulation of transcription by RNA polymerase II"/>
    <property type="evidence" value="ECO:0007669"/>
    <property type="project" value="InterPro"/>
</dbReference>
<dbReference type="GO" id="GO:0080092">
    <property type="term" value="P:regulation of pollen tube growth"/>
    <property type="evidence" value="ECO:0000315"/>
    <property type="project" value="UniProtKB"/>
</dbReference>
<dbReference type="CDD" id="cd00265">
    <property type="entry name" value="MADS_MEF2_like"/>
    <property type="match status" value="1"/>
</dbReference>
<dbReference type="FunFam" id="3.40.1810.10:FF:000014">
    <property type="entry name" value="MADS-box transcription factor 41"/>
    <property type="match status" value="1"/>
</dbReference>
<dbReference type="Gene3D" id="3.40.1810.10">
    <property type="entry name" value="Transcription factor, MADS-box"/>
    <property type="match status" value="1"/>
</dbReference>
<dbReference type="InterPro" id="IPR050142">
    <property type="entry name" value="MADS-box/MEF2_TF"/>
</dbReference>
<dbReference type="InterPro" id="IPR033896">
    <property type="entry name" value="MEF2-like_N"/>
</dbReference>
<dbReference type="InterPro" id="IPR002100">
    <property type="entry name" value="TF_MADSbox"/>
</dbReference>
<dbReference type="InterPro" id="IPR036879">
    <property type="entry name" value="TF_MADSbox_sf"/>
</dbReference>
<dbReference type="PANTHER" id="PTHR48019">
    <property type="entry name" value="SERUM RESPONSE FACTOR HOMOLOG"/>
    <property type="match status" value="1"/>
</dbReference>
<dbReference type="Pfam" id="PF00319">
    <property type="entry name" value="SRF-TF"/>
    <property type="match status" value="1"/>
</dbReference>
<dbReference type="PRINTS" id="PR00404">
    <property type="entry name" value="MADSDOMAIN"/>
</dbReference>
<dbReference type="SMART" id="SM00432">
    <property type="entry name" value="MADS"/>
    <property type="match status" value="1"/>
</dbReference>
<dbReference type="SUPFAM" id="SSF55455">
    <property type="entry name" value="SRF-like"/>
    <property type="match status" value="1"/>
</dbReference>
<dbReference type="PROSITE" id="PS00350">
    <property type="entry name" value="MADS_BOX_1"/>
    <property type="match status" value="1"/>
</dbReference>
<dbReference type="PROSITE" id="PS50066">
    <property type="entry name" value="MADS_BOX_2"/>
    <property type="match status" value="1"/>
</dbReference>